<accession>C1KW66</accession>
<evidence type="ECO:0000255" key="1">
    <source>
        <dbReference type="HAMAP-Rule" id="MF_00741"/>
    </source>
</evidence>
<reference key="1">
    <citation type="journal article" date="2012" name="BMC Genomics">
        <title>Comparative genomics and transcriptomics of lineages I, II, and III strains of Listeria monocytogenes.</title>
        <authorList>
            <person name="Hain T."/>
            <person name="Ghai R."/>
            <person name="Billion A."/>
            <person name="Kuenne C.T."/>
            <person name="Steinweg C."/>
            <person name="Izar B."/>
            <person name="Mohamed W."/>
            <person name="Mraheil M."/>
            <person name="Domann E."/>
            <person name="Schaffrath S."/>
            <person name="Karst U."/>
            <person name="Goesmann A."/>
            <person name="Oehm S."/>
            <person name="Puhler A."/>
            <person name="Merkl R."/>
            <person name="Vorwerk S."/>
            <person name="Glaser P."/>
            <person name="Garrido P."/>
            <person name="Rusniok C."/>
            <person name="Buchrieser C."/>
            <person name="Goebel W."/>
            <person name="Chakraborty T."/>
        </authorList>
    </citation>
    <scope>NUCLEOTIDE SEQUENCE [LARGE SCALE GENOMIC DNA]</scope>
    <source>
        <strain>CLIP80459</strain>
    </source>
</reference>
<dbReference type="EC" id="6.3.3.1" evidence="1"/>
<dbReference type="EMBL" id="FM242711">
    <property type="protein sequence ID" value="CAS05541.1"/>
    <property type="molecule type" value="Genomic_DNA"/>
</dbReference>
<dbReference type="RefSeq" id="WP_003726210.1">
    <property type="nucleotide sequence ID" value="NC_012488.1"/>
</dbReference>
<dbReference type="SMR" id="C1KW66"/>
<dbReference type="KEGG" id="lmc:Lm4b_01781"/>
<dbReference type="HOGENOM" id="CLU_047116_0_0_9"/>
<dbReference type="UniPathway" id="UPA00074">
    <property type="reaction ID" value="UER00129"/>
</dbReference>
<dbReference type="GO" id="GO:0005829">
    <property type="term" value="C:cytosol"/>
    <property type="evidence" value="ECO:0007669"/>
    <property type="project" value="TreeGrafter"/>
</dbReference>
<dbReference type="GO" id="GO:0005524">
    <property type="term" value="F:ATP binding"/>
    <property type="evidence" value="ECO:0007669"/>
    <property type="project" value="UniProtKB-KW"/>
</dbReference>
<dbReference type="GO" id="GO:0004637">
    <property type="term" value="F:phosphoribosylamine-glycine ligase activity"/>
    <property type="evidence" value="ECO:0007669"/>
    <property type="project" value="TreeGrafter"/>
</dbReference>
<dbReference type="GO" id="GO:0004641">
    <property type="term" value="F:phosphoribosylformylglycinamidine cyclo-ligase activity"/>
    <property type="evidence" value="ECO:0007669"/>
    <property type="project" value="UniProtKB-UniRule"/>
</dbReference>
<dbReference type="GO" id="GO:0006189">
    <property type="term" value="P:'de novo' IMP biosynthetic process"/>
    <property type="evidence" value="ECO:0007669"/>
    <property type="project" value="UniProtKB-UniRule"/>
</dbReference>
<dbReference type="GO" id="GO:0046084">
    <property type="term" value="P:adenine biosynthetic process"/>
    <property type="evidence" value="ECO:0007669"/>
    <property type="project" value="TreeGrafter"/>
</dbReference>
<dbReference type="CDD" id="cd02196">
    <property type="entry name" value="PurM"/>
    <property type="match status" value="1"/>
</dbReference>
<dbReference type="FunFam" id="3.30.1330.10:FF:000001">
    <property type="entry name" value="Phosphoribosylformylglycinamidine cyclo-ligase"/>
    <property type="match status" value="1"/>
</dbReference>
<dbReference type="FunFam" id="3.90.650.10:FF:000001">
    <property type="entry name" value="Phosphoribosylformylglycinamidine cyclo-ligase"/>
    <property type="match status" value="1"/>
</dbReference>
<dbReference type="Gene3D" id="3.90.650.10">
    <property type="entry name" value="PurM-like C-terminal domain"/>
    <property type="match status" value="1"/>
</dbReference>
<dbReference type="Gene3D" id="3.30.1330.10">
    <property type="entry name" value="PurM-like, N-terminal domain"/>
    <property type="match status" value="1"/>
</dbReference>
<dbReference type="HAMAP" id="MF_00741">
    <property type="entry name" value="AIRS"/>
    <property type="match status" value="1"/>
</dbReference>
<dbReference type="InterPro" id="IPR010918">
    <property type="entry name" value="PurM-like_C_dom"/>
</dbReference>
<dbReference type="InterPro" id="IPR036676">
    <property type="entry name" value="PurM-like_C_sf"/>
</dbReference>
<dbReference type="InterPro" id="IPR016188">
    <property type="entry name" value="PurM-like_N"/>
</dbReference>
<dbReference type="InterPro" id="IPR036921">
    <property type="entry name" value="PurM-like_N_sf"/>
</dbReference>
<dbReference type="InterPro" id="IPR004733">
    <property type="entry name" value="PurM_cligase"/>
</dbReference>
<dbReference type="NCBIfam" id="TIGR00878">
    <property type="entry name" value="purM"/>
    <property type="match status" value="1"/>
</dbReference>
<dbReference type="PANTHER" id="PTHR10520:SF12">
    <property type="entry name" value="TRIFUNCTIONAL PURINE BIOSYNTHETIC PROTEIN ADENOSINE-3"/>
    <property type="match status" value="1"/>
</dbReference>
<dbReference type="PANTHER" id="PTHR10520">
    <property type="entry name" value="TRIFUNCTIONAL PURINE BIOSYNTHETIC PROTEIN ADENOSINE-3-RELATED"/>
    <property type="match status" value="1"/>
</dbReference>
<dbReference type="Pfam" id="PF00586">
    <property type="entry name" value="AIRS"/>
    <property type="match status" value="1"/>
</dbReference>
<dbReference type="Pfam" id="PF02769">
    <property type="entry name" value="AIRS_C"/>
    <property type="match status" value="1"/>
</dbReference>
<dbReference type="SUPFAM" id="SSF56042">
    <property type="entry name" value="PurM C-terminal domain-like"/>
    <property type="match status" value="1"/>
</dbReference>
<dbReference type="SUPFAM" id="SSF55326">
    <property type="entry name" value="PurM N-terminal domain-like"/>
    <property type="match status" value="1"/>
</dbReference>
<comment type="catalytic activity">
    <reaction evidence="1">
        <text>2-formamido-N(1)-(5-O-phospho-beta-D-ribosyl)acetamidine + ATP = 5-amino-1-(5-phospho-beta-D-ribosyl)imidazole + ADP + phosphate + H(+)</text>
        <dbReference type="Rhea" id="RHEA:23032"/>
        <dbReference type="ChEBI" id="CHEBI:15378"/>
        <dbReference type="ChEBI" id="CHEBI:30616"/>
        <dbReference type="ChEBI" id="CHEBI:43474"/>
        <dbReference type="ChEBI" id="CHEBI:137981"/>
        <dbReference type="ChEBI" id="CHEBI:147287"/>
        <dbReference type="ChEBI" id="CHEBI:456216"/>
        <dbReference type="EC" id="6.3.3.1"/>
    </reaction>
</comment>
<comment type="pathway">
    <text evidence="1">Purine metabolism; IMP biosynthesis via de novo pathway; 5-amino-1-(5-phospho-D-ribosyl)imidazole from N(2)-formyl-N(1)-(5-phospho-D-ribosyl)glycinamide: step 2/2.</text>
</comment>
<comment type="subcellular location">
    <subcellularLocation>
        <location evidence="1">Cytoplasm</location>
    </subcellularLocation>
</comment>
<comment type="similarity">
    <text evidence="1">Belongs to the AIR synthase family.</text>
</comment>
<protein>
    <recommendedName>
        <fullName evidence="1">Phosphoribosylformylglycinamidine cyclo-ligase</fullName>
        <ecNumber evidence="1">6.3.3.1</ecNumber>
    </recommendedName>
    <alternativeName>
        <fullName evidence="1">AIR synthase</fullName>
    </alternativeName>
    <alternativeName>
        <fullName evidence="1">AIRS</fullName>
    </alternativeName>
    <alternativeName>
        <fullName evidence="1">Phosphoribosyl-aminoimidazole synthetase</fullName>
    </alternativeName>
</protein>
<sequence length="349" mass="37415">MAENAYSKAGVDVEAGYQVVERIKKHVARTERLGAMGALGSFGGMFDLSSLHLKEPVLVSGTDGVGTKLLLAIEADKHDTIGIDCVAMCVNDILAQGAEPLFFLDYIATGKTDPVKMEQIVKGVADGCEQAGAALIGGETAEMPDMYGAEDYDLAGFTVGAVEKQKLITEGAVKEGDTLIGIPSSGIHSNGYSLVRKIFFKDNELTLDAEISELDVPLVEELLKPTRIYVKPVLEVLKEVDVHGITHVTGGGFVENLPRMLTNDLAVKVELGSWPVLPIFDVMKKYGQLSELEMYEIFNMGIGMVLAVAKADVERTLEVLVQNGEAAYVIGEVTTRENDAVIFTGGTKG</sequence>
<gene>
    <name evidence="1" type="primary">purM</name>
    <name type="ordered locus">Lm4b_01781</name>
</gene>
<feature type="chain" id="PRO_1000212827" description="Phosphoribosylformylglycinamidine cyclo-ligase">
    <location>
        <begin position="1"/>
        <end position="349"/>
    </location>
</feature>
<keyword id="KW-0067">ATP-binding</keyword>
<keyword id="KW-0963">Cytoplasm</keyword>
<keyword id="KW-0436">Ligase</keyword>
<keyword id="KW-0547">Nucleotide-binding</keyword>
<keyword id="KW-0658">Purine biosynthesis</keyword>
<organism>
    <name type="scientific">Listeria monocytogenes serotype 4b (strain CLIP80459)</name>
    <dbReference type="NCBI Taxonomy" id="568819"/>
    <lineage>
        <taxon>Bacteria</taxon>
        <taxon>Bacillati</taxon>
        <taxon>Bacillota</taxon>
        <taxon>Bacilli</taxon>
        <taxon>Bacillales</taxon>
        <taxon>Listeriaceae</taxon>
        <taxon>Listeria</taxon>
    </lineage>
</organism>
<proteinExistence type="inferred from homology"/>
<name>PUR5_LISMC</name>